<evidence type="ECO:0000255" key="1">
    <source>
        <dbReference type="HAMAP-Rule" id="MF_01507"/>
    </source>
</evidence>
<accession>P60358</accession>
<accession>Q99TN2</accession>
<protein>
    <recommendedName>
        <fullName evidence="1">UPF0297 protein SAV1617</fullName>
    </recommendedName>
</protein>
<proteinExistence type="inferred from homology"/>
<sequence length="86" mass="10303">MENFDKTMKFDYEELPTQDVRDVLNNVYRTLDERGYNAVNQIVGYLLSGDPAYIPRQNEARNQIRHIDRDVIMEELVSYYLKEQNK</sequence>
<organism>
    <name type="scientific">Staphylococcus aureus (strain Mu50 / ATCC 700699)</name>
    <dbReference type="NCBI Taxonomy" id="158878"/>
    <lineage>
        <taxon>Bacteria</taxon>
        <taxon>Bacillati</taxon>
        <taxon>Bacillota</taxon>
        <taxon>Bacilli</taxon>
        <taxon>Bacillales</taxon>
        <taxon>Staphylococcaceae</taxon>
        <taxon>Staphylococcus</taxon>
    </lineage>
</organism>
<name>Y1617_STAAM</name>
<dbReference type="EMBL" id="BA000017">
    <property type="protein sequence ID" value="BAB57779.1"/>
    <property type="molecule type" value="Genomic_DNA"/>
</dbReference>
<dbReference type="RefSeq" id="WP_000426912.1">
    <property type="nucleotide sequence ID" value="NC_002758.2"/>
</dbReference>
<dbReference type="SMR" id="P60358"/>
<dbReference type="KEGG" id="sav:SAV1617"/>
<dbReference type="HOGENOM" id="CLU_162466_0_0_9"/>
<dbReference type="PhylomeDB" id="P60358"/>
<dbReference type="Proteomes" id="UP000002481">
    <property type="component" value="Chromosome"/>
</dbReference>
<dbReference type="HAMAP" id="MF_01507">
    <property type="entry name" value="UPF0297"/>
    <property type="match status" value="1"/>
</dbReference>
<dbReference type="InterPro" id="IPR009309">
    <property type="entry name" value="IreB"/>
</dbReference>
<dbReference type="NCBIfam" id="NF003997">
    <property type="entry name" value="PRK05473.1"/>
    <property type="match status" value="1"/>
</dbReference>
<dbReference type="PANTHER" id="PTHR40067">
    <property type="entry name" value="UPF0297 PROTEIN YRZL"/>
    <property type="match status" value="1"/>
</dbReference>
<dbReference type="PANTHER" id="PTHR40067:SF1">
    <property type="entry name" value="UPF0297 PROTEIN YRZL"/>
    <property type="match status" value="1"/>
</dbReference>
<dbReference type="Pfam" id="PF06135">
    <property type="entry name" value="IreB"/>
    <property type="match status" value="1"/>
</dbReference>
<dbReference type="PIRSF" id="PIRSF037258">
    <property type="entry name" value="DUF965_bac"/>
    <property type="match status" value="1"/>
</dbReference>
<comment type="similarity">
    <text evidence="1">Belongs to the UPF0297 family.</text>
</comment>
<reference key="1">
    <citation type="journal article" date="2001" name="Lancet">
        <title>Whole genome sequencing of meticillin-resistant Staphylococcus aureus.</title>
        <authorList>
            <person name="Kuroda M."/>
            <person name="Ohta T."/>
            <person name="Uchiyama I."/>
            <person name="Baba T."/>
            <person name="Yuzawa H."/>
            <person name="Kobayashi I."/>
            <person name="Cui L."/>
            <person name="Oguchi A."/>
            <person name="Aoki K."/>
            <person name="Nagai Y."/>
            <person name="Lian J.-Q."/>
            <person name="Ito T."/>
            <person name="Kanamori M."/>
            <person name="Matsumaru H."/>
            <person name="Maruyama A."/>
            <person name="Murakami H."/>
            <person name="Hosoyama A."/>
            <person name="Mizutani-Ui Y."/>
            <person name="Takahashi N.K."/>
            <person name="Sawano T."/>
            <person name="Inoue R."/>
            <person name="Kaito C."/>
            <person name="Sekimizu K."/>
            <person name="Hirakawa H."/>
            <person name="Kuhara S."/>
            <person name="Goto S."/>
            <person name="Yabuzaki J."/>
            <person name="Kanehisa M."/>
            <person name="Yamashita A."/>
            <person name="Oshima K."/>
            <person name="Furuya K."/>
            <person name="Yoshino C."/>
            <person name="Shiba T."/>
            <person name="Hattori M."/>
            <person name="Ogasawara N."/>
            <person name="Hayashi H."/>
            <person name="Hiramatsu K."/>
        </authorList>
    </citation>
    <scope>NUCLEOTIDE SEQUENCE [LARGE SCALE GENOMIC DNA]</scope>
    <source>
        <strain>Mu50 / ATCC 700699</strain>
    </source>
</reference>
<feature type="chain" id="PRO_0000216980" description="UPF0297 protein SAV1617">
    <location>
        <begin position="1"/>
        <end position="86"/>
    </location>
</feature>
<gene>
    <name type="ordered locus">SAV1617</name>
</gene>